<keyword id="KW-0169">Cobalamin biosynthesis</keyword>
<keyword id="KW-0489">Methyltransferase</keyword>
<keyword id="KW-0949">S-adenosyl-L-methionine</keyword>
<keyword id="KW-0808">Transferase</keyword>
<evidence type="ECO:0000255" key="1">
    <source>
        <dbReference type="HAMAP-Rule" id="MF_00787"/>
    </source>
</evidence>
<sequence>MREETPEQPAPLRSGYTTGSCATATSLAAARLLLGGTISDAVQIVLPKGQQVLMRLEFCRAWENGAEAGTLKDAGDDPDVTHGALVFARVRLGAEPGVRFHAGPGVGTVTRPGLTLAVGEPAINPVPRQMIERHLAQLAAERGYAGGFEVAIGVEGGAELALKTMNPRLGILGGLSILGTSGIVRPFSCSAYIASIHQGIDVARANGVRHIAACTGNASEDAMRRRYGLPEIALIEMGDFAGAVLKHLRKAPVEKLSLCGGFGKISKLAGGHLDLHSRHSSIDLPQLAGWAAALGASTALQDSMRAANTSQQALAQAHAEGVALGDAVCAHALRFARGIVPTEVALEVFAIDRQGNLVGQACEERR</sequence>
<gene>
    <name evidence="1" type="primary">cbiD</name>
    <name type="ordered locus">PA14_26470</name>
</gene>
<feature type="chain" id="PRO_1000046875" description="Cobalt-precorrin-5B C(1)-methyltransferase">
    <location>
        <begin position="1"/>
        <end position="366"/>
    </location>
</feature>
<comment type="function">
    <text evidence="1">Catalyzes the methylation of C-1 in cobalt-precorrin-5B to form cobalt-precorrin-6A.</text>
</comment>
<comment type="catalytic activity">
    <reaction evidence="1">
        <text>Co-precorrin-5B + S-adenosyl-L-methionine = Co-precorrin-6A + S-adenosyl-L-homocysteine</text>
        <dbReference type="Rhea" id="RHEA:26285"/>
        <dbReference type="ChEBI" id="CHEBI:57856"/>
        <dbReference type="ChEBI" id="CHEBI:59789"/>
        <dbReference type="ChEBI" id="CHEBI:60063"/>
        <dbReference type="ChEBI" id="CHEBI:60064"/>
        <dbReference type="EC" id="2.1.1.195"/>
    </reaction>
</comment>
<comment type="pathway">
    <text evidence="1">Cofactor biosynthesis; adenosylcobalamin biosynthesis; cob(II)yrinate a,c-diamide from sirohydrochlorin (anaerobic route): step 6/10.</text>
</comment>
<comment type="similarity">
    <text evidence="1">Belongs to the CbiD family.</text>
</comment>
<organism>
    <name type="scientific">Pseudomonas aeruginosa (strain UCBPP-PA14)</name>
    <dbReference type="NCBI Taxonomy" id="208963"/>
    <lineage>
        <taxon>Bacteria</taxon>
        <taxon>Pseudomonadati</taxon>
        <taxon>Pseudomonadota</taxon>
        <taxon>Gammaproteobacteria</taxon>
        <taxon>Pseudomonadales</taxon>
        <taxon>Pseudomonadaceae</taxon>
        <taxon>Pseudomonas</taxon>
    </lineage>
</organism>
<name>CBID_PSEAB</name>
<dbReference type="EC" id="2.1.1.195" evidence="1"/>
<dbReference type="EMBL" id="CP000438">
    <property type="protein sequence ID" value="ABJ12146.1"/>
    <property type="molecule type" value="Genomic_DNA"/>
</dbReference>
<dbReference type="RefSeq" id="WP_003138665.1">
    <property type="nucleotide sequence ID" value="NZ_CP034244.1"/>
</dbReference>
<dbReference type="SMR" id="Q02P70"/>
<dbReference type="KEGG" id="pau:PA14_26470"/>
<dbReference type="PseudoCAP" id="PA14_26470"/>
<dbReference type="HOGENOM" id="CLU_041273_0_0_6"/>
<dbReference type="BioCyc" id="PAER208963:G1G74-2204-MONOMER"/>
<dbReference type="UniPathway" id="UPA00148">
    <property type="reaction ID" value="UER00227"/>
</dbReference>
<dbReference type="Proteomes" id="UP000000653">
    <property type="component" value="Chromosome"/>
</dbReference>
<dbReference type="GO" id="GO:0043780">
    <property type="term" value="F:cobalt-precorrin-5B C1-methyltransferase activity"/>
    <property type="evidence" value="ECO:0007669"/>
    <property type="project" value="RHEA"/>
</dbReference>
<dbReference type="GO" id="GO:0019251">
    <property type="term" value="P:anaerobic cobalamin biosynthetic process"/>
    <property type="evidence" value="ECO:0007669"/>
    <property type="project" value="UniProtKB-UniRule"/>
</dbReference>
<dbReference type="GO" id="GO:0032259">
    <property type="term" value="P:methylation"/>
    <property type="evidence" value="ECO:0007669"/>
    <property type="project" value="UniProtKB-KW"/>
</dbReference>
<dbReference type="Gene3D" id="3.30.2110.10">
    <property type="entry name" value="CbiD-like"/>
    <property type="match status" value="1"/>
</dbReference>
<dbReference type="HAMAP" id="MF_00787">
    <property type="entry name" value="CbiD"/>
    <property type="match status" value="1"/>
</dbReference>
<dbReference type="InterPro" id="IPR002748">
    <property type="entry name" value="CbiD"/>
</dbReference>
<dbReference type="InterPro" id="IPR036074">
    <property type="entry name" value="CbiD_sf"/>
</dbReference>
<dbReference type="NCBIfam" id="TIGR00312">
    <property type="entry name" value="cbiD"/>
    <property type="match status" value="1"/>
</dbReference>
<dbReference type="NCBIfam" id="NF000849">
    <property type="entry name" value="PRK00075.1-1"/>
    <property type="match status" value="1"/>
</dbReference>
<dbReference type="PANTHER" id="PTHR35863">
    <property type="entry name" value="COBALT-PRECORRIN-5B C(1)-METHYLTRANSFERASE"/>
    <property type="match status" value="1"/>
</dbReference>
<dbReference type="PANTHER" id="PTHR35863:SF1">
    <property type="entry name" value="COBALT-PRECORRIN-5B C(1)-METHYLTRANSFERASE"/>
    <property type="match status" value="1"/>
</dbReference>
<dbReference type="Pfam" id="PF01888">
    <property type="entry name" value="CbiD"/>
    <property type="match status" value="1"/>
</dbReference>
<dbReference type="PIRSF" id="PIRSF026782">
    <property type="entry name" value="CbiD"/>
    <property type="match status" value="1"/>
</dbReference>
<dbReference type="SUPFAM" id="SSF111342">
    <property type="entry name" value="CbiD-like"/>
    <property type="match status" value="1"/>
</dbReference>
<reference key="1">
    <citation type="journal article" date="2006" name="Genome Biol.">
        <title>Genomic analysis reveals that Pseudomonas aeruginosa virulence is combinatorial.</title>
        <authorList>
            <person name="Lee D.G."/>
            <person name="Urbach J.M."/>
            <person name="Wu G."/>
            <person name="Liberati N.T."/>
            <person name="Feinbaum R.L."/>
            <person name="Miyata S."/>
            <person name="Diggins L.T."/>
            <person name="He J."/>
            <person name="Saucier M."/>
            <person name="Deziel E."/>
            <person name="Friedman L."/>
            <person name="Li L."/>
            <person name="Grills G."/>
            <person name="Montgomery K."/>
            <person name="Kucherlapati R."/>
            <person name="Rahme L.G."/>
            <person name="Ausubel F.M."/>
        </authorList>
    </citation>
    <scope>NUCLEOTIDE SEQUENCE [LARGE SCALE GENOMIC DNA]</scope>
    <source>
        <strain>UCBPP-PA14</strain>
    </source>
</reference>
<accession>Q02P70</accession>
<protein>
    <recommendedName>
        <fullName evidence="1">Cobalt-precorrin-5B C(1)-methyltransferase</fullName>
        <ecNumber evidence="1">2.1.1.195</ecNumber>
    </recommendedName>
    <alternativeName>
        <fullName evidence="1">Cobalt-precorrin-6A synthase</fullName>
    </alternativeName>
</protein>
<proteinExistence type="inferred from homology"/>